<proteinExistence type="evidence at protein level"/>
<keyword id="KW-0221">Differentiation</keyword>
<keyword id="KW-0479">Metal-binding</keyword>
<keyword id="KW-0539">Nucleus</keyword>
<keyword id="KW-1185">Reference proteome</keyword>
<keyword id="KW-0677">Repeat</keyword>
<keyword id="KW-0678">Repressor</keyword>
<keyword id="KW-0804">Transcription</keyword>
<keyword id="KW-0805">Transcription regulation</keyword>
<keyword id="KW-0862">Zinc</keyword>
<keyword id="KW-0863">Zinc-finger</keyword>
<protein>
    <recommendedName>
        <fullName>Zinc finger protein 431</fullName>
    </recommendedName>
    <alternativeName>
        <fullName>Zinc finger protein 932</fullName>
    </alternativeName>
</protein>
<sequence length="526" mass="61280">MVDALTYDDVYVNFTQEEWALLNPSQKSLYKDVMLETYRNLNAVGYNWEDSNIEEHCESSRRHGRHERNHTGEKPYEGIQYGEAFVHHSSLQMRKIIHTGEKRYKCNQCDKAYSRHSILQIHKRTHSGEKPYECNQCGKAFTQHSHLKIHMVTHTGEKPYKCDQCGKAFAFHSTLQVHKRTHTGEKPYECNQCSKAFAHHCHLRVHKRIHTGEKPYKCDQCGKAFVGQNDLKRHERVHTGEKPYKCNECGKAFVCNASLRTHKTTHTGVKPYECKQCTKSFASHGQLQKHERIHTGEKPYKCDQCGKAFASHDKFQKHERIHIGEKPYKCKQCTKSFASHDKLQKHERIHTGEKPYECKQCTKSFASHNKLQKHERIHTGEKPYKCDQCNKAFVYESYLQVHKKTHTGEKPYKCNECGKAFARHSHLKVHKITHTGEKPYKCNQCGKALAYHSTLQVHQRTHTGEKPYECEQCGKAFANQSYFQVHKRIHTGEKPYKCDQCGKAFVGSSDLKRHERVHTGRETLQM</sequence>
<accession>E9QAG8</accession>
<name>ZN431_MOUSE</name>
<feature type="chain" id="PRO_0000425265" description="Zinc finger protein 431">
    <location>
        <begin position="1"/>
        <end position="526"/>
    </location>
</feature>
<feature type="domain" description="KRAB" evidence="2">
    <location>
        <begin position="5"/>
        <end position="76"/>
    </location>
</feature>
<feature type="zinc finger region" description="C2H2-type 1" evidence="1">
    <location>
        <begin position="104"/>
        <end position="126"/>
    </location>
</feature>
<feature type="zinc finger region" description="C2H2-type 2" evidence="1">
    <location>
        <begin position="132"/>
        <end position="154"/>
    </location>
</feature>
<feature type="zinc finger region" description="C2H2-type 3" evidence="1">
    <location>
        <begin position="160"/>
        <end position="182"/>
    </location>
</feature>
<feature type="zinc finger region" description="C2H2-type 4" evidence="1">
    <location>
        <begin position="188"/>
        <end position="210"/>
    </location>
</feature>
<feature type="zinc finger region" description="C2H2-type 5" evidence="1">
    <location>
        <begin position="216"/>
        <end position="238"/>
    </location>
</feature>
<feature type="zinc finger region" description="C2H2-type 6" evidence="1">
    <location>
        <begin position="244"/>
        <end position="266"/>
    </location>
</feature>
<feature type="zinc finger region" description="C2H2-type 7" evidence="1">
    <location>
        <begin position="272"/>
        <end position="294"/>
    </location>
</feature>
<feature type="zinc finger region" description="C2H2-type 8" evidence="1">
    <location>
        <begin position="300"/>
        <end position="322"/>
    </location>
</feature>
<feature type="zinc finger region" description="C2H2-type 9" evidence="1">
    <location>
        <begin position="328"/>
        <end position="350"/>
    </location>
</feature>
<feature type="zinc finger region" description="C2H2-type 10" evidence="1">
    <location>
        <begin position="356"/>
        <end position="378"/>
    </location>
</feature>
<feature type="zinc finger region" description="C2H2-type 11" evidence="1">
    <location>
        <begin position="384"/>
        <end position="406"/>
    </location>
</feature>
<feature type="zinc finger region" description="C2H2-type 12" evidence="1">
    <location>
        <begin position="412"/>
        <end position="434"/>
    </location>
</feature>
<feature type="zinc finger region" description="C2H2-type 13" evidence="1">
    <location>
        <begin position="440"/>
        <end position="462"/>
    </location>
</feature>
<feature type="zinc finger region" description="C2H2-type 14" evidence="1">
    <location>
        <begin position="468"/>
        <end position="490"/>
    </location>
</feature>
<feature type="zinc finger region" description="C2H2-type 15" evidence="1">
    <location>
        <begin position="496"/>
        <end position="518"/>
    </location>
</feature>
<feature type="sequence conflict" description="In Ref. 2; BC012405." evidence="5" ref="2">
    <original>I</original>
    <variation>T</variation>
    <location>
        <position position="323"/>
    </location>
</feature>
<reference key="1">
    <citation type="journal article" date="2009" name="PLoS Biol.">
        <title>Lineage-specific biology revealed by a finished genome assembly of the mouse.</title>
        <authorList>
            <person name="Church D.M."/>
            <person name="Goodstadt L."/>
            <person name="Hillier L.W."/>
            <person name="Zody M.C."/>
            <person name="Goldstein S."/>
            <person name="She X."/>
            <person name="Bult C.J."/>
            <person name="Agarwala R."/>
            <person name="Cherry J.L."/>
            <person name="DiCuccio M."/>
            <person name="Hlavina W."/>
            <person name="Kapustin Y."/>
            <person name="Meric P."/>
            <person name="Maglott D."/>
            <person name="Birtle Z."/>
            <person name="Marques A.C."/>
            <person name="Graves T."/>
            <person name="Zhou S."/>
            <person name="Teague B."/>
            <person name="Potamousis K."/>
            <person name="Churas C."/>
            <person name="Place M."/>
            <person name="Herschleb J."/>
            <person name="Runnheim R."/>
            <person name="Forrest D."/>
            <person name="Amos-Landgraf J."/>
            <person name="Schwartz D.C."/>
            <person name="Cheng Z."/>
            <person name="Lindblad-Toh K."/>
            <person name="Eichler E.E."/>
            <person name="Ponting C.P."/>
        </authorList>
    </citation>
    <scope>NUCLEOTIDE SEQUENCE [LARGE SCALE GENOMIC DNA]</scope>
    <source>
        <strain>C57BL/6J</strain>
    </source>
</reference>
<reference key="2">
    <citation type="journal article" date="2004" name="Genome Res.">
        <title>The status, quality, and expansion of the NIH full-length cDNA project: the Mammalian Gene Collection (MGC).</title>
        <authorList>
            <consortium name="The MGC Project Team"/>
        </authorList>
    </citation>
    <scope>NUCLEOTIDE SEQUENCE [LARGE SCALE MRNA]</scope>
</reference>
<reference key="3">
    <citation type="journal article" date="2011" name="J. Biol. Chem.">
        <title>A novel KRAB domain-containing zinc finger transcription factor ZNF431 directly represses Patched1 transcription.</title>
        <authorList>
            <person name="He Z."/>
            <person name="Cai J."/>
            <person name="Lim J.W."/>
            <person name="Kroll K."/>
            <person name="Ma L."/>
        </authorList>
    </citation>
    <scope>FUNCTION</scope>
    <scope>INTERACTION WITH HDAC1 AND HDAC2</scope>
    <scope>SUBCELLULAR LOCATION</scope>
    <scope>TISSUE SPECIFICITY</scope>
    <scope>DEVELOPMENTAL STAGE</scope>
</reference>
<reference key="4">
    <citation type="journal article" date="2012" name="Vitam. Horm.">
        <title>ZFP932 suppresses cellular Hedgehog response and Patched1 transcription.</title>
        <authorList>
            <person name="Huang G.J."/>
            <person name="He Z."/>
            <person name="Ma L."/>
        </authorList>
    </citation>
    <scope>FUNCTION</scope>
    <scope>INTERACTION WITH HDAC2</scope>
    <scope>DEVELOPMENTAL STAGE</scope>
</reference>
<evidence type="ECO:0000255" key="1">
    <source>
        <dbReference type="PROSITE-ProRule" id="PRU00042"/>
    </source>
</evidence>
<evidence type="ECO:0000255" key="2">
    <source>
        <dbReference type="PROSITE-ProRule" id="PRU00119"/>
    </source>
</evidence>
<evidence type="ECO:0000269" key="3">
    <source>
    </source>
</evidence>
<evidence type="ECO:0000269" key="4">
    <source>
    </source>
</evidence>
<evidence type="ECO:0000305" key="5"/>
<dbReference type="EMBL" id="AC123679">
    <property type="status" value="NOT_ANNOTATED_CDS"/>
    <property type="molecule type" value="Genomic_DNA"/>
</dbReference>
<dbReference type="EMBL" id="BC012405">
    <property type="status" value="NOT_ANNOTATED_CDS"/>
    <property type="molecule type" value="mRNA"/>
</dbReference>
<dbReference type="CCDS" id="CCDS59681.1"/>
<dbReference type="RefSeq" id="NP_663538.2">
    <property type="nucleotide sequence ID" value="NM_145563.2"/>
</dbReference>
<dbReference type="SMR" id="E9QAG8"/>
<dbReference type="BioGRID" id="213490">
    <property type="interactions" value="27"/>
</dbReference>
<dbReference type="FunCoup" id="E9QAG8">
    <property type="interactions" value="729"/>
</dbReference>
<dbReference type="IntAct" id="E9QAG8">
    <property type="interactions" value="2"/>
</dbReference>
<dbReference type="STRING" id="10090.ENSMUSP00000108159"/>
<dbReference type="iPTMnet" id="E9QAG8"/>
<dbReference type="PhosphoSitePlus" id="E9QAG8"/>
<dbReference type="jPOST" id="E9QAG8"/>
<dbReference type="PaxDb" id="10090-ENSMUSP00000108159"/>
<dbReference type="ProteomicsDB" id="302083"/>
<dbReference type="Ensembl" id="ENSMUST00000112540.8">
    <property type="protein sequence ID" value="ENSMUSP00000108159.2"/>
    <property type="gene ID" value="ENSMUSG00000066613.15"/>
</dbReference>
<dbReference type="Ensembl" id="ENSMUST00000187241.3">
    <property type="protein sequence ID" value="ENSMUSP00000140446.3"/>
    <property type="gene ID" value="ENSMUSG00000066613.15"/>
</dbReference>
<dbReference type="GeneID" id="69504"/>
<dbReference type="KEGG" id="mmu:69504"/>
<dbReference type="UCSC" id="uc008ypn.1">
    <property type="organism name" value="mouse"/>
</dbReference>
<dbReference type="AGR" id="MGI:1916754"/>
<dbReference type="CTD" id="69504"/>
<dbReference type="MGI" id="MGI:1916754">
    <property type="gene designation" value="Zfp932"/>
</dbReference>
<dbReference type="VEuPathDB" id="HostDB:ENSMUSG00000066613"/>
<dbReference type="eggNOG" id="KOG1721">
    <property type="taxonomic scope" value="Eukaryota"/>
</dbReference>
<dbReference type="GeneTree" id="ENSGT00940000154469"/>
<dbReference type="HOGENOM" id="CLU_002678_44_0_1"/>
<dbReference type="InParanoid" id="E9QAG8"/>
<dbReference type="OrthoDB" id="3156061at2759"/>
<dbReference type="PhylomeDB" id="E9QAG8"/>
<dbReference type="TreeFam" id="TF338854"/>
<dbReference type="Reactome" id="R-MMU-212436">
    <property type="pathway name" value="Generic Transcription Pathway"/>
</dbReference>
<dbReference type="Reactome" id="R-MMU-9843940">
    <property type="pathway name" value="Regulation of endogenous retroelements by KRAB-ZFP proteins"/>
</dbReference>
<dbReference type="BioGRID-ORCS" id="69504">
    <property type="hits" value="6 hits in 41 CRISPR screens"/>
</dbReference>
<dbReference type="ChiTaRS" id="Zfp932">
    <property type="organism name" value="mouse"/>
</dbReference>
<dbReference type="PRO" id="PR:E9QAG8"/>
<dbReference type="Proteomes" id="UP000000589">
    <property type="component" value="Chromosome 5"/>
</dbReference>
<dbReference type="RNAct" id="E9QAG8">
    <property type="molecule type" value="protein"/>
</dbReference>
<dbReference type="Bgee" id="ENSMUSG00000066613">
    <property type="expression patterns" value="Expressed in ovary and 101 other cell types or tissues"/>
</dbReference>
<dbReference type="ExpressionAtlas" id="E9QAG8">
    <property type="expression patterns" value="baseline and differential"/>
</dbReference>
<dbReference type="GO" id="GO:0005634">
    <property type="term" value="C:nucleus"/>
    <property type="evidence" value="ECO:0000314"/>
    <property type="project" value="UniProtKB"/>
</dbReference>
<dbReference type="GO" id="GO:0003682">
    <property type="term" value="F:chromatin binding"/>
    <property type="evidence" value="ECO:0000314"/>
    <property type="project" value="UniProtKB"/>
</dbReference>
<dbReference type="GO" id="GO:0042826">
    <property type="term" value="F:histone deacetylase binding"/>
    <property type="evidence" value="ECO:0000353"/>
    <property type="project" value="UniProtKB"/>
</dbReference>
<dbReference type="GO" id="GO:0000978">
    <property type="term" value="F:RNA polymerase II cis-regulatory region sequence-specific DNA binding"/>
    <property type="evidence" value="ECO:0000314"/>
    <property type="project" value="UniProtKB"/>
</dbReference>
<dbReference type="GO" id="GO:0008270">
    <property type="term" value="F:zinc ion binding"/>
    <property type="evidence" value="ECO:0007669"/>
    <property type="project" value="UniProtKB-KW"/>
</dbReference>
<dbReference type="GO" id="GO:0030154">
    <property type="term" value="P:cell differentiation"/>
    <property type="evidence" value="ECO:0007669"/>
    <property type="project" value="UniProtKB-KW"/>
</dbReference>
<dbReference type="GO" id="GO:0043433">
    <property type="term" value="P:negative regulation of DNA-binding transcription factor activity"/>
    <property type="evidence" value="ECO:0000314"/>
    <property type="project" value="UniProtKB"/>
</dbReference>
<dbReference type="GO" id="GO:0045668">
    <property type="term" value="P:negative regulation of osteoblast differentiation"/>
    <property type="evidence" value="ECO:0000304"/>
    <property type="project" value="UniProtKB"/>
</dbReference>
<dbReference type="GO" id="GO:0000122">
    <property type="term" value="P:negative regulation of transcription by RNA polymerase II"/>
    <property type="evidence" value="ECO:0000314"/>
    <property type="project" value="UniProtKB"/>
</dbReference>
<dbReference type="CDD" id="cd07765">
    <property type="entry name" value="KRAB_A-box"/>
    <property type="match status" value="1"/>
</dbReference>
<dbReference type="FunFam" id="3.30.160.60:FF:004137">
    <property type="match status" value="1"/>
</dbReference>
<dbReference type="FunFam" id="3.30.160.60:FF:002402">
    <property type="entry name" value="Zinc finger protein 347"/>
    <property type="match status" value="1"/>
</dbReference>
<dbReference type="FunFam" id="3.30.160.60:FF:000016">
    <property type="entry name" value="zinc finger protein 37 homolog"/>
    <property type="match status" value="1"/>
</dbReference>
<dbReference type="FunFam" id="3.30.160.60:FF:001498">
    <property type="entry name" value="Zinc finger protein 404"/>
    <property type="match status" value="1"/>
</dbReference>
<dbReference type="FunFam" id="3.30.160.60:FF:000773">
    <property type="entry name" value="Zinc finger protein 44"/>
    <property type="match status" value="6"/>
</dbReference>
<dbReference type="FunFam" id="3.30.160.60:FF:002004">
    <property type="entry name" value="Zinc finger protein 473"/>
    <property type="match status" value="1"/>
</dbReference>
<dbReference type="FunFam" id="3.30.160.60:FF:002254">
    <property type="entry name" value="Zinc finger protein 540"/>
    <property type="match status" value="2"/>
</dbReference>
<dbReference type="FunFam" id="3.30.160.60:FF:000912">
    <property type="entry name" value="Zinc finger protein 660"/>
    <property type="match status" value="1"/>
</dbReference>
<dbReference type="FunFam" id="3.30.160.60:FF:000624">
    <property type="entry name" value="zinc finger protein 697"/>
    <property type="match status" value="1"/>
</dbReference>
<dbReference type="FunFam" id="3.30.160.60:FF:001671">
    <property type="entry name" value="Zinc finger protein 94"/>
    <property type="match status" value="1"/>
</dbReference>
<dbReference type="Gene3D" id="6.10.140.140">
    <property type="match status" value="1"/>
</dbReference>
<dbReference type="Gene3D" id="3.30.160.60">
    <property type="entry name" value="Classic Zinc Finger"/>
    <property type="match status" value="16"/>
</dbReference>
<dbReference type="InterPro" id="IPR001909">
    <property type="entry name" value="KRAB"/>
</dbReference>
<dbReference type="InterPro" id="IPR036051">
    <property type="entry name" value="KRAB_dom_sf"/>
</dbReference>
<dbReference type="InterPro" id="IPR050758">
    <property type="entry name" value="Znf_C2H2-type"/>
</dbReference>
<dbReference type="InterPro" id="IPR036236">
    <property type="entry name" value="Znf_C2H2_sf"/>
</dbReference>
<dbReference type="InterPro" id="IPR013087">
    <property type="entry name" value="Znf_C2H2_type"/>
</dbReference>
<dbReference type="PANTHER" id="PTHR23234:SF10">
    <property type="entry name" value="RIKEN CDNA 6720489N17 GENE-RELATED"/>
    <property type="match status" value="1"/>
</dbReference>
<dbReference type="PANTHER" id="PTHR23234">
    <property type="entry name" value="ZNF44 PROTEIN"/>
    <property type="match status" value="1"/>
</dbReference>
<dbReference type="Pfam" id="PF01352">
    <property type="entry name" value="KRAB"/>
    <property type="match status" value="1"/>
</dbReference>
<dbReference type="Pfam" id="PF00096">
    <property type="entry name" value="zf-C2H2"/>
    <property type="match status" value="10"/>
</dbReference>
<dbReference type="Pfam" id="PF13465">
    <property type="entry name" value="zf-H2C2_2"/>
    <property type="match status" value="2"/>
</dbReference>
<dbReference type="SMART" id="SM00349">
    <property type="entry name" value="KRAB"/>
    <property type="match status" value="1"/>
</dbReference>
<dbReference type="SMART" id="SM00355">
    <property type="entry name" value="ZnF_C2H2"/>
    <property type="match status" value="15"/>
</dbReference>
<dbReference type="SUPFAM" id="SSF57667">
    <property type="entry name" value="beta-beta-alpha zinc fingers"/>
    <property type="match status" value="9"/>
</dbReference>
<dbReference type="SUPFAM" id="SSF109640">
    <property type="entry name" value="KRAB domain (Kruppel-associated box)"/>
    <property type="match status" value="1"/>
</dbReference>
<dbReference type="PROSITE" id="PS50805">
    <property type="entry name" value="KRAB"/>
    <property type="match status" value="1"/>
</dbReference>
<dbReference type="PROSITE" id="PS00028">
    <property type="entry name" value="ZINC_FINGER_C2H2_1"/>
    <property type="match status" value="15"/>
</dbReference>
<dbReference type="PROSITE" id="PS50157">
    <property type="entry name" value="ZINC_FINGER_C2H2_2"/>
    <property type="match status" value="15"/>
</dbReference>
<comment type="function">
    <text evidence="3 4">Sequence-specific DNA binding transcriptional repressor. Represses target gene transcription by recruiting HDAC1 and HDAC2 histone deacetylases. Acts as a specific transcriptional repressor for PTCH1 during embryonic development. Required for osteoblast differentiation and sonic hedgehog/SHH signaling response. Binds to the consensus site 5'-GCGCCC-3' in the promoter of PTCH1.</text>
</comment>
<comment type="subunit">
    <text evidence="3 4">Interacts (via KRAB domain) with HDAC2; the interaction is direct. Interacts (via KRAB domain) with HDAC1.</text>
</comment>
<comment type="interaction">
    <interactant intactId="EBI-9549639">
        <id>E9QAG8</id>
    </interactant>
    <interactant intactId="EBI-301912">
        <id>O09106</id>
        <label>Hdac1</label>
    </interactant>
    <organismsDiffer>false</organismsDiffer>
    <experiments>3</experiments>
</comment>
<comment type="interaction">
    <interactant intactId="EBI-9549639">
        <id>E9QAG8</id>
    </interactant>
    <interactant intactId="EBI-302251">
        <id>P70288</id>
        <label>Hdac2</label>
    </interactant>
    <organismsDiffer>false</organismsDiffer>
    <experiments>3</experiments>
</comment>
<comment type="subcellular location">
    <subcellularLocation>
        <location evidence="3">Nucleus</location>
    </subcellularLocation>
</comment>
<comment type="tissue specificity">
    <text evidence="3">Expressed in brain, heart, lung, thymus, spleen, lymph node, liver, kidney, muscle, testis, ovary, skin and uterus.</text>
</comment>
<comment type="developmental stage">
    <text evidence="3 4">Expressed in limb mesenchyme at 10.5 dpc. Expressed in tooth, submandibular glands, thymus, thyroid, vibrissa follicles at 14.5 dpc.</text>
</comment>
<comment type="domain">
    <text>The KRAB domain is necessary for its repressive activity.</text>
</comment>
<organism>
    <name type="scientific">Mus musculus</name>
    <name type="common">Mouse</name>
    <dbReference type="NCBI Taxonomy" id="10090"/>
    <lineage>
        <taxon>Eukaryota</taxon>
        <taxon>Metazoa</taxon>
        <taxon>Chordata</taxon>
        <taxon>Craniata</taxon>
        <taxon>Vertebrata</taxon>
        <taxon>Euteleostomi</taxon>
        <taxon>Mammalia</taxon>
        <taxon>Eutheria</taxon>
        <taxon>Euarchontoglires</taxon>
        <taxon>Glires</taxon>
        <taxon>Rodentia</taxon>
        <taxon>Myomorpha</taxon>
        <taxon>Muroidea</taxon>
        <taxon>Muridae</taxon>
        <taxon>Murinae</taxon>
        <taxon>Mus</taxon>
        <taxon>Mus</taxon>
    </lineage>
</organism>
<gene>
    <name type="primary">Znf431</name>
    <name type="synonym">Zfp431</name>
    <name type="synonym">Zfp932</name>
</gene>